<evidence type="ECO:0000250" key="1"/>
<evidence type="ECO:0000250" key="2">
    <source>
        <dbReference type="UniProtKB" id="P82979"/>
    </source>
</evidence>
<evidence type="ECO:0000255" key="3">
    <source>
        <dbReference type="PROSITE-ProRule" id="PRU00186"/>
    </source>
</evidence>
<evidence type="ECO:0000256" key="4">
    <source>
        <dbReference type="SAM" id="MobiDB-lite"/>
    </source>
</evidence>
<evidence type="ECO:0000305" key="5"/>
<evidence type="ECO:0007744" key="6">
    <source>
    </source>
</evidence>
<evidence type="ECO:0007744" key="7">
    <source>
    </source>
</evidence>
<organism>
    <name type="scientific">Mus musculus</name>
    <name type="common">Mouse</name>
    <dbReference type="NCBI Taxonomy" id="10090"/>
    <lineage>
        <taxon>Eukaryota</taxon>
        <taxon>Metazoa</taxon>
        <taxon>Chordata</taxon>
        <taxon>Craniata</taxon>
        <taxon>Vertebrata</taxon>
        <taxon>Euteleostomi</taxon>
        <taxon>Mammalia</taxon>
        <taxon>Eutheria</taxon>
        <taxon>Euarchontoglires</taxon>
        <taxon>Glires</taxon>
        <taxon>Rodentia</taxon>
        <taxon>Myomorpha</taxon>
        <taxon>Muroidea</taxon>
        <taxon>Muridae</taxon>
        <taxon>Murinae</taxon>
        <taxon>Mus</taxon>
        <taxon>Mus</taxon>
    </lineage>
</organism>
<name>SARNP_MOUSE</name>
<protein>
    <recommendedName>
        <fullName>SAP domain-containing ribonucleoprotein</fullName>
    </recommendedName>
    <alternativeName>
        <fullName>Nuclear protein Hcc-1</fullName>
    </alternativeName>
</protein>
<feature type="initiator methionine" description="Removed" evidence="7">
    <location>
        <position position="1"/>
    </location>
</feature>
<feature type="chain" id="PRO_0000083919" description="SAP domain-containing ribonucleoprotein">
    <location>
        <begin position="2"/>
        <end position="210"/>
    </location>
</feature>
<feature type="domain" description="SAP" evidence="3">
    <location>
        <begin position="8"/>
        <end position="42"/>
    </location>
</feature>
<feature type="region of interest" description="Disordered" evidence="4">
    <location>
        <begin position="45"/>
        <end position="87"/>
    </location>
</feature>
<feature type="region of interest" description="Disordered" evidence="4">
    <location>
        <begin position="162"/>
        <end position="210"/>
    </location>
</feature>
<feature type="compositionally biased region" description="Acidic residues" evidence="4">
    <location>
        <begin position="45"/>
        <end position="64"/>
    </location>
</feature>
<feature type="compositionally biased region" description="Basic and acidic residues" evidence="4">
    <location>
        <begin position="65"/>
        <end position="87"/>
    </location>
</feature>
<feature type="compositionally biased region" description="Polar residues" evidence="4">
    <location>
        <begin position="184"/>
        <end position="193"/>
    </location>
</feature>
<feature type="modified residue" description="N-acetylalanine" evidence="7">
    <location>
        <position position="2"/>
    </location>
</feature>
<feature type="modified residue" description="N6-acetyllysine" evidence="7">
    <location>
        <position position="10"/>
    </location>
</feature>
<feature type="modified residue" description="N6-acetyllysine" evidence="7">
    <location>
        <position position="142"/>
    </location>
</feature>
<feature type="modified residue" description="Phosphoserine" evidence="6">
    <location>
        <position position="163"/>
    </location>
</feature>
<keyword id="KW-0007">Acetylation</keyword>
<keyword id="KW-0238">DNA-binding</keyword>
<keyword id="KW-0509">mRNA transport</keyword>
<keyword id="KW-0539">Nucleus</keyword>
<keyword id="KW-0597">Phosphoprotein</keyword>
<keyword id="KW-1185">Reference proteome</keyword>
<keyword id="KW-0694">RNA-binding</keyword>
<keyword id="KW-0804">Transcription</keyword>
<keyword id="KW-0805">Transcription regulation</keyword>
<keyword id="KW-0810">Translation regulation</keyword>
<keyword id="KW-0813">Transport</keyword>
<proteinExistence type="evidence at protein level"/>
<dbReference type="EMBL" id="AK003453">
    <property type="protein sequence ID" value="BAB22799.1"/>
    <property type="molecule type" value="mRNA"/>
</dbReference>
<dbReference type="EMBL" id="AK018773">
    <property type="protein sequence ID" value="BAB31400.1"/>
    <property type="molecule type" value="mRNA"/>
</dbReference>
<dbReference type="EMBL" id="AK088266">
    <property type="protein sequence ID" value="BAC40246.1"/>
    <property type="molecule type" value="mRNA"/>
</dbReference>
<dbReference type="EMBL" id="AK146248">
    <property type="protein sequence ID" value="BAE27010.1"/>
    <property type="molecule type" value="mRNA"/>
</dbReference>
<dbReference type="EMBL" id="BC027510">
    <property type="protein sequence ID" value="AAH27510.1"/>
    <property type="molecule type" value="mRNA"/>
</dbReference>
<dbReference type="CCDS" id="CCDS36092.1"/>
<dbReference type="RefSeq" id="NP_079640.1">
    <property type="nucleotide sequence ID" value="NM_025364.3"/>
</dbReference>
<dbReference type="SMR" id="Q9D1J3"/>
<dbReference type="BioGRID" id="211227">
    <property type="interactions" value="27"/>
</dbReference>
<dbReference type="FunCoup" id="Q9D1J3">
    <property type="interactions" value="3996"/>
</dbReference>
<dbReference type="STRING" id="10090.ENSMUSP00000100863"/>
<dbReference type="GlyGen" id="Q9D1J3">
    <property type="glycosylation" value="4 sites, 1 N-linked glycan (1 site), 1 O-linked glycan (3 sites)"/>
</dbReference>
<dbReference type="iPTMnet" id="Q9D1J3"/>
<dbReference type="PhosphoSitePlus" id="Q9D1J3"/>
<dbReference type="SwissPalm" id="Q9D1J3"/>
<dbReference type="jPOST" id="Q9D1J3"/>
<dbReference type="PaxDb" id="10090-ENSMUSP00000100863"/>
<dbReference type="ProteomicsDB" id="256596"/>
<dbReference type="Pumba" id="Q9D1J3"/>
<dbReference type="Antibodypedia" id="15547">
    <property type="antibodies" value="204 antibodies from 31 providers"/>
</dbReference>
<dbReference type="DNASU" id="66118"/>
<dbReference type="Ensembl" id="ENSMUST00000105230.4">
    <property type="protein sequence ID" value="ENSMUSP00000100863.3"/>
    <property type="gene ID" value="ENSMUSG00000078427.4"/>
</dbReference>
<dbReference type="GeneID" id="66118"/>
<dbReference type="KEGG" id="mmu:66118"/>
<dbReference type="UCSC" id="uc007hor.2">
    <property type="organism name" value="mouse"/>
</dbReference>
<dbReference type="AGR" id="MGI:1913368"/>
<dbReference type="CTD" id="84324"/>
<dbReference type="MGI" id="MGI:1913368">
    <property type="gene designation" value="Sarnp"/>
</dbReference>
<dbReference type="VEuPathDB" id="HostDB:ENSMUSG00000078427"/>
<dbReference type="eggNOG" id="KOG0720">
    <property type="taxonomic scope" value="Eukaryota"/>
</dbReference>
<dbReference type="eggNOG" id="KOG4259">
    <property type="taxonomic scope" value="Eukaryota"/>
</dbReference>
<dbReference type="GeneTree" id="ENSGT00390000002944"/>
<dbReference type="HOGENOM" id="CLU_073926_1_0_1"/>
<dbReference type="InParanoid" id="Q9D1J3"/>
<dbReference type="OMA" id="ETPTKKH"/>
<dbReference type="OrthoDB" id="5837849at2759"/>
<dbReference type="PhylomeDB" id="Q9D1J3"/>
<dbReference type="TreeFam" id="TF319843"/>
<dbReference type="Reactome" id="R-MMU-159236">
    <property type="pathway name" value="Transport of Mature mRNA derived from an Intron-Containing Transcript"/>
</dbReference>
<dbReference type="Reactome" id="R-MMU-72187">
    <property type="pathway name" value="mRNA 3'-end processing"/>
</dbReference>
<dbReference type="Reactome" id="R-MMU-73856">
    <property type="pathway name" value="RNA Polymerase II Transcription Termination"/>
</dbReference>
<dbReference type="BioGRID-ORCS" id="66118">
    <property type="hits" value="13 hits in 78 CRISPR screens"/>
</dbReference>
<dbReference type="ChiTaRS" id="Sarnp">
    <property type="organism name" value="mouse"/>
</dbReference>
<dbReference type="PRO" id="PR:Q9D1J3"/>
<dbReference type="Proteomes" id="UP000000589">
    <property type="component" value="Chromosome 10"/>
</dbReference>
<dbReference type="RNAct" id="Q9D1J3">
    <property type="molecule type" value="protein"/>
</dbReference>
<dbReference type="Bgee" id="ENSMUSG00000078427">
    <property type="expression patterns" value="Expressed in ventricular zone and 71 other cell types or tissues"/>
</dbReference>
<dbReference type="ExpressionAtlas" id="Q9D1J3">
    <property type="expression patterns" value="baseline and differential"/>
</dbReference>
<dbReference type="GO" id="GO:0036464">
    <property type="term" value="C:cytoplasmic ribonucleoprotein granule"/>
    <property type="evidence" value="ECO:0007669"/>
    <property type="project" value="Ensembl"/>
</dbReference>
<dbReference type="GO" id="GO:0016607">
    <property type="term" value="C:nuclear speck"/>
    <property type="evidence" value="ECO:0000250"/>
    <property type="project" value="UniProtKB"/>
</dbReference>
<dbReference type="GO" id="GO:0005634">
    <property type="term" value="C:nucleus"/>
    <property type="evidence" value="ECO:0000314"/>
    <property type="project" value="MGI"/>
</dbReference>
<dbReference type="GO" id="GO:0000346">
    <property type="term" value="C:transcription export complex"/>
    <property type="evidence" value="ECO:0000250"/>
    <property type="project" value="UniProtKB"/>
</dbReference>
<dbReference type="GO" id="GO:0003682">
    <property type="term" value="F:chromatin binding"/>
    <property type="evidence" value="ECO:0000314"/>
    <property type="project" value="MGI"/>
</dbReference>
<dbReference type="GO" id="GO:0003677">
    <property type="term" value="F:DNA binding"/>
    <property type="evidence" value="ECO:0007669"/>
    <property type="project" value="UniProtKB-KW"/>
</dbReference>
<dbReference type="GO" id="GO:0003723">
    <property type="term" value="F:RNA binding"/>
    <property type="evidence" value="ECO:0007669"/>
    <property type="project" value="UniProtKB-KW"/>
</dbReference>
<dbReference type="GO" id="GO:0006406">
    <property type="term" value="P:mRNA export from nucleus"/>
    <property type="evidence" value="ECO:0000250"/>
    <property type="project" value="UniProtKB"/>
</dbReference>
<dbReference type="GO" id="GO:0000122">
    <property type="term" value="P:negative regulation of transcription by RNA polymerase II"/>
    <property type="evidence" value="ECO:0000314"/>
    <property type="project" value="MGI"/>
</dbReference>
<dbReference type="GO" id="GO:0006417">
    <property type="term" value="P:regulation of translation"/>
    <property type="evidence" value="ECO:0007669"/>
    <property type="project" value="UniProtKB-KW"/>
</dbReference>
<dbReference type="FunFam" id="1.10.720.30:FF:000013">
    <property type="entry name" value="SAP domain-containing ribonucleoprotein"/>
    <property type="match status" value="1"/>
</dbReference>
<dbReference type="Gene3D" id="1.10.720.30">
    <property type="entry name" value="SAP domain"/>
    <property type="match status" value="1"/>
</dbReference>
<dbReference type="InterPro" id="IPR003034">
    <property type="entry name" value="SAP_dom"/>
</dbReference>
<dbReference type="InterPro" id="IPR036361">
    <property type="entry name" value="SAP_dom_sf"/>
</dbReference>
<dbReference type="InterPro" id="IPR052240">
    <property type="entry name" value="SAP_domain_ribonucleoprotein"/>
</dbReference>
<dbReference type="PANTHER" id="PTHR46551">
    <property type="entry name" value="SAP DOMAIN-CONTAINING RIBONUCLEOPROTEIN"/>
    <property type="match status" value="1"/>
</dbReference>
<dbReference type="PANTHER" id="PTHR46551:SF1">
    <property type="entry name" value="SAP DOMAIN-CONTAINING RIBONUCLEOPROTEIN"/>
    <property type="match status" value="1"/>
</dbReference>
<dbReference type="Pfam" id="PF02037">
    <property type="entry name" value="SAP"/>
    <property type="match status" value="1"/>
</dbReference>
<dbReference type="SMART" id="SM00513">
    <property type="entry name" value="SAP"/>
    <property type="match status" value="1"/>
</dbReference>
<dbReference type="SUPFAM" id="SSF68906">
    <property type="entry name" value="SAP domain"/>
    <property type="match status" value="1"/>
</dbReference>
<dbReference type="PROSITE" id="PS50800">
    <property type="entry name" value="SAP"/>
    <property type="match status" value="1"/>
</dbReference>
<sequence>MAAETVELHKLKLAELKQECLARGLETKGIKQDLINRLQAYLEDHAEEEANEEDVLGDETEEEEPKPIELPVKEEEPPEKAVDMASEKKVVKITSGIPQTERMQKRAERFNVPVSLESKKAARAARFGISSVPTKGLSSDTKPMVNLDKLKERAQRFGLNVSSISRKSEDDEKLKKRKERFGIVTSSAGTGTTEDTEAKKRKRAERFGIA</sequence>
<accession>Q9D1J3</accession>
<accession>Q3UJZ4</accession>
<accession>Q9CU18</accession>
<gene>
    <name type="primary">Sarnp</name>
    <name type="synonym">Hcc1</name>
</gene>
<comment type="function">
    <text evidence="2">Binds both single-stranded and double-stranded DNA with higher affinity for the single-stranded form. Specifically binds to scaffold/matrix attachment region DNA. Also binds single-stranded RNA. Enhances RNA unwinding activity of DDX39A. May participate in important transcriptional or translational control of cell growth, metabolism and carcinogenesis. Component of the TREX complex which is thought to couple mRNA transcription, processing and nuclear export, and specifically associates with spliced mRNA and not with unspliced pre-mRNA. The TREX complex is recruited to spliced mRNAs by a transcription-independent mechanism, binds to mRNA upstream of the exon-junction complex (EJC) and is recruited in a splicing- and cap-dependent manner to a region near the 5' end of the mRNA where it functions in mRNA export to the cytoplasm via the TAP/NXF1 pathway. Associates with DDX39B, which facilitates RNA binding of DDX39B and likely plays a role in mRNA export.</text>
</comment>
<comment type="subunit">
    <text evidence="2">Interacts with DDX39A. Interacts with FUS. Interacts (via the C-terminal domain) with DDX39B; the interaction is direct and facilitates RNA binding of DDX39B. Component of the transcription/export (TREX) complex at least composed of ALYREF/THOC4, DDX39B, SARNP/CIP29, CHTOP and the THO subcomplex; TREX seems to have dynamic structure involving ATP-dependent remodeling; in the complex interacts directly with DDX39B in a ATP-dependent manner which bridges it to ALYREF/THOC4.</text>
</comment>
<comment type="subcellular location">
    <subcellularLocation>
        <location evidence="1">Nucleus</location>
    </subcellularLocation>
    <subcellularLocation>
        <location evidence="1">Nucleus speckle</location>
    </subcellularLocation>
</comment>
<comment type="similarity">
    <text evidence="5">Belongs to the SAP domain-containing ribonucleoprotein family.</text>
</comment>
<reference key="1">
    <citation type="journal article" date="2005" name="Science">
        <title>The transcriptional landscape of the mammalian genome.</title>
        <authorList>
            <person name="Carninci P."/>
            <person name="Kasukawa T."/>
            <person name="Katayama S."/>
            <person name="Gough J."/>
            <person name="Frith M.C."/>
            <person name="Maeda N."/>
            <person name="Oyama R."/>
            <person name="Ravasi T."/>
            <person name="Lenhard B."/>
            <person name="Wells C."/>
            <person name="Kodzius R."/>
            <person name="Shimokawa K."/>
            <person name="Bajic V.B."/>
            <person name="Brenner S.E."/>
            <person name="Batalov S."/>
            <person name="Forrest A.R."/>
            <person name="Zavolan M."/>
            <person name="Davis M.J."/>
            <person name="Wilming L.G."/>
            <person name="Aidinis V."/>
            <person name="Allen J.E."/>
            <person name="Ambesi-Impiombato A."/>
            <person name="Apweiler R."/>
            <person name="Aturaliya R.N."/>
            <person name="Bailey T.L."/>
            <person name="Bansal M."/>
            <person name="Baxter L."/>
            <person name="Beisel K.W."/>
            <person name="Bersano T."/>
            <person name="Bono H."/>
            <person name="Chalk A.M."/>
            <person name="Chiu K.P."/>
            <person name="Choudhary V."/>
            <person name="Christoffels A."/>
            <person name="Clutterbuck D.R."/>
            <person name="Crowe M.L."/>
            <person name="Dalla E."/>
            <person name="Dalrymple B.P."/>
            <person name="de Bono B."/>
            <person name="Della Gatta G."/>
            <person name="di Bernardo D."/>
            <person name="Down T."/>
            <person name="Engstrom P."/>
            <person name="Fagiolini M."/>
            <person name="Faulkner G."/>
            <person name="Fletcher C.F."/>
            <person name="Fukushima T."/>
            <person name="Furuno M."/>
            <person name="Futaki S."/>
            <person name="Gariboldi M."/>
            <person name="Georgii-Hemming P."/>
            <person name="Gingeras T.R."/>
            <person name="Gojobori T."/>
            <person name="Green R.E."/>
            <person name="Gustincich S."/>
            <person name="Harbers M."/>
            <person name="Hayashi Y."/>
            <person name="Hensch T.K."/>
            <person name="Hirokawa N."/>
            <person name="Hill D."/>
            <person name="Huminiecki L."/>
            <person name="Iacono M."/>
            <person name="Ikeo K."/>
            <person name="Iwama A."/>
            <person name="Ishikawa T."/>
            <person name="Jakt M."/>
            <person name="Kanapin A."/>
            <person name="Katoh M."/>
            <person name="Kawasawa Y."/>
            <person name="Kelso J."/>
            <person name="Kitamura H."/>
            <person name="Kitano H."/>
            <person name="Kollias G."/>
            <person name="Krishnan S.P."/>
            <person name="Kruger A."/>
            <person name="Kummerfeld S.K."/>
            <person name="Kurochkin I.V."/>
            <person name="Lareau L.F."/>
            <person name="Lazarevic D."/>
            <person name="Lipovich L."/>
            <person name="Liu J."/>
            <person name="Liuni S."/>
            <person name="McWilliam S."/>
            <person name="Madan Babu M."/>
            <person name="Madera M."/>
            <person name="Marchionni L."/>
            <person name="Matsuda H."/>
            <person name="Matsuzawa S."/>
            <person name="Miki H."/>
            <person name="Mignone F."/>
            <person name="Miyake S."/>
            <person name="Morris K."/>
            <person name="Mottagui-Tabar S."/>
            <person name="Mulder N."/>
            <person name="Nakano N."/>
            <person name="Nakauchi H."/>
            <person name="Ng P."/>
            <person name="Nilsson R."/>
            <person name="Nishiguchi S."/>
            <person name="Nishikawa S."/>
            <person name="Nori F."/>
            <person name="Ohara O."/>
            <person name="Okazaki Y."/>
            <person name="Orlando V."/>
            <person name="Pang K.C."/>
            <person name="Pavan W.J."/>
            <person name="Pavesi G."/>
            <person name="Pesole G."/>
            <person name="Petrovsky N."/>
            <person name="Piazza S."/>
            <person name="Reed J."/>
            <person name="Reid J.F."/>
            <person name="Ring B.Z."/>
            <person name="Ringwald M."/>
            <person name="Rost B."/>
            <person name="Ruan Y."/>
            <person name="Salzberg S.L."/>
            <person name="Sandelin A."/>
            <person name="Schneider C."/>
            <person name="Schoenbach C."/>
            <person name="Sekiguchi K."/>
            <person name="Semple C.A."/>
            <person name="Seno S."/>
            <person name="Sessa L."/>
            <person name="Sheng Y."/>
            <person name="Shibata Y."/>
            <person name="Shimada H."/>
            <person name="Shimada K."/>
            <person name="Silva D."/>
            <person name="Sinclair B."/>
            <person name="Sperling S."/>
            <person name="Stupka E."/>
            <person name="Sugiura K."/>
            <person name="Sultana R."/>
            <person name="Takenaka Y."/>
            <person name="Taki K."/>
            <person name="Tammoja K."/>
            <person name="Tan S.L."/>
            <person name="Tang S."/>
            <person name="Taylor M.S."/>
            <person name="Tegner J."/>
            <person name="Teichmann S.A."/>
            <person name="Ueda H.R."/>
            <person name="van Nimwegen E."/>
            <person name="Verardo R."/>
            <person name="Wei C.L."/>
            <person name="Yagi K."/>
            <person name="Yamanishi H."/>
            <person name="Zabarovsky E."/>
            <person name="Zhu S."/>
            <person name="Zimmer A."/>
            <person name="Hide W."/>
            <person name="Bult C."/>
            <person name="Grimmond S.M."/>
            <person name="Teasdale R.D."/>
            <person name="Liu E.T."/>
            <person name="Brusic V."/>
            <person name="Quackenbush J."/>
            <person name="Wahlestedt C."/>
            <person name="Mattick J.S."/>
            <person name="Hume D.A."/>
            <person name="Kai C."/>
            <person name="Sasaki D."/>
            <person name="Tomaru Y."/>
            <person name="Fukuda S."/>
            <person name="Kanamori-Katayama M."/>
            <person name="Suzuki M."/>
            <person name="Aoki J."/>
            <person name="Arakawa T."/>
            <person name="Iida J."/>
            <person name="Imamura K."/>
            <person name="Itoh M."/>
            <person name="Kato T."/>
            <person name="Kawaji H."/>
            <person name="Kawagashira N."/>
            <person name="Kawashima T."/>
            <person name="Kojima M."/>
            <person name="Kondo S."/>
            <person name="Konno H."/>
            <person name="Nakano K."/>
            <person name="Ninomiya N."/>
            <person name="Nishio T."/>
            <person name="Okada M."/>
            <person name="Plessy C."/>
            <person name="Shibata K."/>
            <person name="Shiraki T."/>
            <person name="Suzuki S."/>
            <person name="Tagami M."/>
            <person name="Waki K."/>
            <person name="Watahiki A."/>
            <person name="Okamura-Oho Y."/>
            <person name="Suzuki H."/>
            <person name="Kawai J."/>
            <person name="Hayashizaki Y."/>
        </authorList>
    </citation>
    <scope>NUCLEOTIDE SEQUENCE [LARGE SCALE MRNA]</scope>
    <source>
        <strain>BALB/cJ</strain>
        <strain>C57BL/6J</strain>
        <strain>NOD</strain>
        <tissue>Cerebellum</tissue>
        <tissue>Embryo</tissue>
        <tissue>Thymus</tissue>
    </source>
</reference>
<reference key="2">
    <citation type="journal article" date="2004" name="Genome Res.">
        <title>The status, quality, and expansion of the NIH full-length cDNA project: the Mammalian Gene Collection (MGC).</title>
        <authorList>
            <consortium name="The MGC Project Team"/>
        </authorList>
    </citation>
    <scope>NUCLEOTIDE SEQUENCE [LARGE SCALE MRNA]</scope>
    <source>
        <tissue>Mammary gland</tissue>
    </source>
</reference>
<reference key="3">
    <citation type="journal article" date="2010" name="Cell">
        <title>A tissue-specific atlas of mouse protein phosphorylation and expression.</title>
        <authorList>
            <person name="Huttlin E.L."/>
            <person name="Jedrychowski M.P."/>
            <person name="Elias J.E."/>
            <person name="Goswami T."/>
            <person name="Rad R."/>
            <person name="Beausoleil S.A."/>
            <person name="Villen J."/>
            <person name="Haas W."/>
            <person name="Sowa M.E."/>
            <person name="Gygi S.P."/>
        </authorList>
    </citation>
    <scope>PHOSPHORYLATION [LARGE SCALE ANALYSIS] AT SER-163</scope>
    <scope>IDENTIFICATION BY MASS SPECTROMETRY [LARGE SCALE ANALYSIS]</scope>
    <source>
        <tissue>Brain</tissue>
        <tissue>Brown adipose tissue</tissue>
        <tissue>Heart</tissue>
        <tissue>Kidney</tissue>
        <tissue>Liver</tissue>
        <tissue>Lung</tissue>
        <tissue>Pancreas</tissue>
        <tissue>Spleen</tissue>
        <tissue>Testis</tissue>
    </source>
</reference>
<reference key="4">
    <citation type="journal article" date="2013" name="Mol. Cell">
        <title>SIRT5-mediated lysine desuccinylation impacts diverse metabolic pathways.</title>
        <authorList>
            <person name="Park J."/>
            <person name="Chen Y."/>
            <person name="Tishkoff D.X."/>
            <person name="Peng C."/>
            <person name="Tan M."/>
            <person name="Dai L."/>
            <person name="Xie Z."/>
            <person name="Zhang Y."/>
            <person name="Zwaans B.M."/>
            <person name="Skinner M.E."/>
            <person name="Lombard D.B."/>
            <person name="Zhao Y."/>
        </authorList>
    </citation>
    <scope>ACETYLATION [LARGE SCALE ANALYSIS] AT ALA-2; LYS-10 AND LYS-142</scope>
    <scope>CLEAVAGE OF INITIATOR METHIONINE [LARGE SCALE ANALYSIS]</scope>
    <scope>IDENTIFICATION BY MASS SPECTROMETRY [LARGE SCALE ANALYSIS]</scope>
    <source>
        <tissue>Embryonic fibroblast</tissue>
    </source>
</reference>